<sequence length="142" mass="14753">MSASSPLSPTAGGPFAAWYAAFGDWARTDGAAWLYLFKALLAAFIALGVSMRLDLPAPKTAMTTVFIVMQRKAAPCSRKASTGSPARSSGSSRRSRSSGCSRSSRSCSCWRSPCGSRCAPPAPRATATSAVTASCSPAIRPR</sequence>
<protein>
    <recommendedName>
        <fullName>Fusaric acid resistance protein FusB</fullName>
    </recommendedName>
</protein>
<comment type="function">
    <text>Involved in the resistance (detoxification) of the fungal toxin fusaric acid.</text>
</comment>
<reference key="1">
    <citation type="journal article" date="1991" name="Agric. Biol. Chem.">
        <title>Molecular cloning and characterization of the fusaric acid-resistance gene from Pseudomonas cepacia.</title>
        <authorList>
            <person name="Utsumi R."/>
            <person name="Yagi T."/>
            <person name="Katayama S."/>
            <person name="Katsuragi K."/>
            <person name="Tachibana K."/>
            <person name="Toyoda H."/>
            <person name="Ouchi S."/>
            <person name="Obata K."/>
            <person name="Shibano Y."/>
            <person name="Noda M."/>
        </authorList>
    </citation>
    <scope>NUCLEOTIDE SEQUENCE [GENOMIC DNA]</scope>
    <source>
        <strain>UK1</strain>
    </source>
</reference>
<accession>P24127</accession>
<organism>
    <name type="scientific">Burkholderia cepacia</name>
    <name type="common">Pseudomonas cepacia</name>
    <dbReference type="NCBI Taxonomy" id="292"/>
    <lineage>
        <taxon>Bacteria</taxon>
        <taxon>Pseudomonadati</taxon>
        <taxon>Pseudomonadota</taxon>
        <taxon>Betaproteobacteria</taxon>
        <taxon>Burkholderiales</taxon>
        <taxon>Burkholderiaceae</taxon>
        <taxon>Burkholderia</taxon>
        <taxon>Burkholderia cepacia complex</taxon>
    </lineage>
</organism>
<name>FUSB_BURCE</name>
<feature type="chain" id="PRO_0000087385" description="Fusaric acid resistance protein FusB">
    <location>
        <begin position="1"/>
        <end position="142"/>
    </location>
</feature>
<feature type="region of interest" description="Disordered" evidence="1">
    <location>
        <begin position="73"/>
        <end position="142"/>
    </location>
</feature>
<feature type="compositionally biased region" description="Low complexity" evidence="1">
    <location>
        <begin position="81"/>
        <end position="142"/>
    </location>
</feature>
<proteinExistence type="predicted"/>
<evidence type="ECO:0000256" key="1">
    <source>
        <dbReference type="SAM" id="MobiDB-lite"/>
    </source>
</evidence>
<gene>
    <name type="primary">fusB</name>
</gene>
<dbReference type="EMBL" id="S77489">
    <property type="protein sequence ID" value="AAC60389.1"/>
    <property type="molecule type" value="Genomic_DNA"/>
</dbReference>
<dbReference type="EMBL" id="D12503">
    <property type="protein sequence ID" value="BAA02065.1"/>
    <property type="molecule type" value="Genomic_DNA"/>
</dbReference>
<dbReference type="PIR" id="JS0510">
    <property type="entry name" value="JS0510"/>
</dbReference>
<dbReference type="eggNOG" id="COG1289">
    <property type="taxonomic scope" value="Bacteria"/>
</dbReference>
<dbReference type="GO" id="GO:0005886">
    <property type="term" value="C:plasma membrane"/>
    <property type="evidence" value="ECO:0007669"/>
    <property type="project" value="InterPro"/>
</dbReference>
<dbReference type="GO" id="GO:0022857">
    <property type="term" value="F:transmembrane transporter activity"/>
    <property type="evidence" value="ECO:0007669"/>
    <property type="project" value="InterPro"/>
</dbReference>
<dbReference type="InterPro" id="IPR006726">
    <property type="entry name" value="PHBA_efflux_AaeB/fusaric-R"/>
</dbReference>
<dbReference type="Pfam" id="PF04632">
    <property type="entry name" value="FUSC"/>
    <property type="match status" value="1"/>
</dbReference>